<comment type="function">
    <text evidence="1">Required for nuclear migration.</text>
</comment>
<comment type="subunit">
    <text evidence="1">Self-associates. Interacts with PAC1 (By similarity).</text>
</comment>
<comment type="subcellular location">
    <subcellularLocation>
        <location>Cytoplasm</location>
        <location>Cytoskeleton</location>
    </subcellularLocation>
    <text evidence="1">Localizes to the plus ends of microtubules.</text>
</comment>
<comment type="similarity">
    <text evidence="4">Belongs to the nudE family.</text>
</comment>
<comment type="sequence caution" evidence="4">
    <conflict type="erroneous initiation">
        <sequence resource="EMBL-CDS" id="EAL19136"/>
    </conflict>
    <text>Extended N-terminus.</text>
</comment>
<protein>
    <recommendedName>
        <fullName>Nuclear distribution protein nudE homolog 1</fullName>
    </recommendedName>
</protein>
<dbReference type="EMBL" id="AAEY01000042">
    <property type="protein sequence ID" value="EAL19136.1"/>
    <property type="status" value="ALT_INIT"/>
    <property type="molecule type" value="Genomic_DNA"/>
</dbReference>
<dbReference type="RefSeq" id="XP_773783.1">
    <property type="nucleotide sequence ID" value="XM_768690.1"/>
</dbReference>
<dbReference type="SMR" id="P0CP39"/>
<dbReference type="GeneID" id="4937758"/>
<dbReference type="KEGG" id="cnb:CNBH2350"/>
<dbReference type="HOGENOM" id="CLU_382703_0_0_1"/>
<dbReference type="OrthoDB" id="8142at5206"/>
<dbReference type="GO" id="GO:0005737">
    <property type="term" value="C:cytoplasm"/>
    <property type="evidence" value="ECO:0007669"/>
    <property type="project" value="UniProtKB-KW"/>
</dbReference>
<dbReference type="GO" id="GO:0005871">
    <property type="term" value="C:kinesin complex"/>
    <property type="evidence" value="ECO:0007669"/>
    <property type="project" value="TreeGrafter"/>
</dbReference>
<dbReference type="GO" id="GO:0000776">
    <property type="term" value="C:kinetochore"/>
    <property type="evidence" value="ECO:0007669"/>
    <property type="project" value="TreeGrafter"/>
</dbReference>
<dbReference type="GO" id="GO:0005874">
    <property type="term" value="C:microtubule"/>
    <property type="evidence" value="ECO:0007669"/>
    <property type="project" value="UniProtKB-KW"/>
</dbReference>
<dbReference type="GO" id="GO:0008017">
    <property type="term" value="F:microtubule binding"/>
    <property type="evidence" value="ECO:0007669"/>
    <property type="project" value="InterPro"/>
</dbReference>
<dbReference type="GO" id="GO:0051642">
    <property type="term" value="P:centrosome localization"/>
    <property type="evidence" value="ECO:0007669"/>
    <property type="project" value="TreeGrafter"/>
</dbReference>
<dbReference type="GO" id="GO:0007059">
    <property type="term" value="P:chromosome segregation"/>
    <property type="evidence" value="ECO:0007669"/>
    <property type="project" value="TreeGrafter"/>
</dbReference>
<dbReference type="GO" id="GO:0051303">
    <property type="term" value="P:establishment of chromosome localization"/>
    <property type="evidence" value="ECO:0007669"/>
    <property type="project" value="TreeGrafter"/>
</dbReference>
<dbReference type="GO" id="GO:0000132">
    <property type="term" value="P:establishment of mitotic spindle orientation"/>
    <property type="evidence" value="ECO:0007669"/>
    <property type="project" value="TreeGrafter"/>
</dbReference>
<dbReference type="GO" id="GO:0007020">
    <property type="term" value="P:microtubule nucleation"/>
    <property type="evidence" value="ECO:0007669"/>
    <property type="project" value="TreeGrafter"/>
</dbReference>
<dbReference type="GO" id="GO:0047496">
    <property type="term" value="P:vesicle transport along microtubule"/>
    <property type="evidence" value="ECO:0007669"/>
    <property type="project" value="TreeGrafter"/>
</dbReference>
<dbReference type="Gene3D" id="6.10.250.1080">
    <property type="match status" value="1"/>
</dbReference>
<dbReference type="InterPro" id="IPR033494">
    <property type="entry name" value="NUDE"/>
</dbReference>
<dbReference type="InterPro" id="IPR006964">
    <property type="entry name" value="NUDE_dom"/>
</dbReference>
<dbReference type="PANTHER" id="PTHR10921:SF1">
    <property type="entry name" value="NUCLEAR DISTRIBUTION PROTEIN NUDE HOMOLOG"/>
    <property type="match status" value="1"/>
</dbReference>
<dbReference type="PANTHER" id="PTHR10921">
    <property type="entry name" value="NUCLEAR DISTRIBUTION PROTEIN NUDE HOMOLOG 1"/>
    <property type="match status" value="1"/>
</dbReference>
<dbReference type="Pfam" id="PF04880">
    <property type="entry name" value="NUDE_C"/>
    <property type="match status" value="1"/>
</dbReference>
<gene>
    <name type="primary">NDE1</name>
    <name type="ordered locus">CNBH2350</name>
</gene>
<accession>P0CP39</accession>
<accession>Q55N49</accession>
<accession>Q5KBH9</accession>
<sequence>MVDDEDDITFDSPEEEIAHYREKYRQALDMLTDTRAELEEFQQSSKELEDEMEQELAANDKQQADLREKIKRLDAEKEEWRTKHIALQKMHSSTTSAMQREMDNLRSERDKTLVALRDLEMGNDELERNERVAISSLLDLESKYNRAIEEKTLLEQDLAQKDELETETQRLKDELREANEEISILKDQLARAIATPPSSVSTSSPIHDAACDLSRIHLSDDINASPLPPPVPSKNKSITPEGHSPRRGLSRSGTMSSIPVASPSTKRFSQQIPHSPSFSTLSRSTTSRNLAAAAGTPGSPALARSRSGIPQASPARGIVLASHQQTKSRGFKLLHDLQARLKATDDKLGGAKVPRRNVSNPASVFGVGKRVTSTTSTTSSTTTAPAPHARVTALAKDHNTTPTAQSQQFPGSGIMSPGWVLVGEGEGEDTPTGPWSMTLPAEPNSPLDPTFRSSSTTSNRSLPSRPGIPSPLASGSARSTTSGTAQRQAGQRPSSRLGLKASRRDSEARPLSPSMIPVPSFSSRPMSPDVYQPLRSATPTSGFSSFSASASTSNPPRPNSRTGKRNPIGRGPPPLSSSTRLHHQRSRQSLSGAGPTPTTGADKVERAKRGPRRSSLSNMDKPSLMSASPGSRTPSGRPTSVHVFRETPPPVPRIPSAILKESKVKK</sequence>
<evidence type="ECO:0000250" key="1"/>
<evidence type="ECO:0000255" key="2"/>
<evidence type="ECO:0000256" key="3">
    <source>
        <dbReference type="SAM" id="MobiDB-lite"/>
    </source>
</evidence>
<evidence type="ECO:0000305" key="4"/>
<organism>
    <name type="scientific">Cryptococcus neoformans var. neoformans serotype D (strain B-3501A)</name>
    <name type="common">Filobasidiella neoformans</name>
    <dbReference type="NCBI Taxonomy" id="283643"/>
    <lineage>
        <taxon>Eukaryota</taxon>
        <taxon>Fungi</taxon>
        <taxon>Dikarya</taxon>
        <taxon>Basidiomycota</taxon>
        <taxon>Agaricomycotina</taxon>
        <taxon>Tremellomycetes</taxon>
        <taxon>Tremellales</taxon>
        <taxon>Cryptococcaceae</taxon>
        <taxon>Cryptococcus</taxon>
        <taxon>Cryptococcus neoformans species complex</taxon>
    </lineage>
</organism>
<keyword id="KW-0175">Coiled coil</keyword>
<keyword id="KW-0963">Cytoplasm</keyword>
<keyword id="KW-0206">Cytoskeleton</keyword>
<keyword id="KW-0493">Microtubule</keyword>
<keyword id="KW-0813">Transport</keyword>
<feature type="chain" id="PRO_0000410177" description="Nuclear distribution protein nudE homolog 1">
    <location>
        <begin position="1"/>
        <end position="666"/>
    </location>
</feature>
<feature type="region of interest" description="Disordered" evidence="3">
    <location>
        <begin position="40"/>
        <end position="64"/>
    </location>
</feature>
<feature type="region of interest" description="Disordered" evidence="3">
    <location>
        <begin position="220"/>
        <end position="310"/>
    </location>
</feature>
<feature type="region of interest" description="Disordered" evidence="3">
    <location>
        <begin position="369"/>
        <end position="388"/>
    </location>
</feature>
<feature type="region of interest" description="Disordered" evidence="3">
    <location>
        <begin position="397"/>
        <end position="666"/>
    </location>
</feature>
<feature type="coiled-coil region" evidence="2">
    <location>
        <begin position="14"/>
        <end position="195"/>
    </location>
</feature>
<feature type="compositionally biased region" description="Polar residues" evidence="3">
    <location>
        <begin position="251"/>
        <end position="274"/>
    </location>
</feature>
<feature type="compositionally biased region" description="Low complexity" evidence="3">
    <location>
        <begin position="275"/>
        <end position="287"/>
    </location>
</feature>
<feature type="compositionally biased region" description="Low complexity" evidence="3">
    <location>
        <begin position="372"/>
        <end position="383"/>
    </location>
</feature>
<feature type="compositionally biased region" description="Polar residues" evidence="3">
    <location>
        <begin position="400"/>
        <end position="410"/>
    </location>
</feature>
<feature type="compositionally biased region" description="Low complexity" evidence="3">
    <location>
        <begin position="449"/>
        <end position="465"/>
    </location>
</feature>
<feature type="compositionally biased region" description="Low complexity" evidence="3">
    <location>
        <begin position="473"/>
        <end position="485"/>
    </location>
</feature>
<feature type="compositionally biased region" description="Low complexity" evidence="3">
    <location>
        <begin position="536"/>
        <end position="554"/>
    </location>
</feature>
<feature type="compositionally biased region" description="Polar residues" evidence="3">
    <location>
        <begin position="587"/>
        <end position="599"/>
    </location>
</feature>
<feature type="compositionally biased region" description="Polar residues" evidence="3">
    <location>
        <begin position="614"/>
        <end position="638"/>
    </location>
</feature>
<proteinExistence type="inferred from homology"/>
<reference key="1">
    <citation type="journal article" date="2005" name="Science">
        <title>The genome of the basidiomycetous yeast and human pathogen Cryptococcus neoformans.</title>
        <authorList>
            <person name="Loftus B.J."/>
            <person name="Fung E."/>
            <person name="Roncaglia P."/>
            <person name="Rowley D."/>
            <person name="Amedeo P."/>
            <person name="Bruno D."/>
            <person name="Vamathevan J."/>
            <person name="Miranda M."/>
            <person name="Anderson I.J."/>
            <person name="Fraser J.A."/>
            <person name="Allen J.E."/>
            <person name="Bosdet I.E."/>
            <person name="Brent M.R."/>
            <person name="Chiu R."/>
            <person name="Doering T.L."/>
            <person name="Donlin M.J."/>
            <person name="D'Souza C.A."/>
            <person name="Fox D.S."/>
            <person name="Grinberg V."/>
            <person name="Fu J."/>
            <person name="Fukushima M."/>
            <person name="Haas B.J."/>
            <person name="Huang J.C."/>
            <person name="Janbon G."/>
            <person name="Jones S.J.M."/>
            <person name="Koo H.L."/>
            <person name="Krzywinski M.I."/>
            <person name="Kwon-Chung K.J."/>
            <person name="Lengeler K.B."/>
            <person name="Maiti R."/>
            <person name="Marra M.A."/>
            <person name="Marra R.E."/>
            <person name="Mathewson C.A."/>
            <person name="Mitchell T.G."/>
            <person name="Pertea M."/>
            <person name="Riggs F.R."/>
            <person name="Salzberg S.L."/>
            <person name="Schein J.E."/>
            <person name="Shvartsbeyn A."/>
            <person name="Shin H."/>
            <person name="Shumway M."/>
            <person name="Specht C.A."/>
            <person name="Suh B.B."/>
            <person name="Tenney A."/>
            <person name="Utterback T.R."/>
            <person name="Wickes B.L."/>
            <person name="Wortman J.R."/>
            <person name="Wye N.H."/>
            <person name="Kronstad J.W."/>
            <person name="Lodge J.K."/>
            <person name="Heitman J."/>
            <person name="Davis R.W."/>
            <person name="Fraser C.M."/>
            <person name="Hyman R.W."/>
        </authorList>
    </citation>
    <scope>NUCLEOTIDE SEQUENCE [LARGE SCALE GENOMIC DNA]</scope>
    <source>
        <strain>B-3501A</strain>
    </source>
</reference>
<name>NDE1_CRYNB</name>